<proteinExistence type="inferred from homology"/>
<feature type="chain" id="PRO_1000074790" description="D-alanine--D-alanine ligase">
    <location>
        <begin position="1"/>
        <end position="334"/>
    </location>
</feature>
<feature type="domain" description="ATP-grasp" evidence="2">
    <location>
        <begin position="124"/>
        <end position="329"/>
    </location>
</feature>
<feature type="binding site" evidence="2">
    <location>
        <begin position="154"/>
        <end position="209"/>
    </location>
    <ligand>
        <name>ATP</name>
        <dbReference type="ChEBI" id="CHEBI:30616"/>
    </ligand>
</feature>
<feature type="binding site" evidence="2">
    <location>
        <position position="283"/>
    </location>
    <ligand>
        <name>Mg(2+)</name>
        <dbReference type="ChEBI" id="CHEBI:18420"/>
        <label>1</label>
    </ligand>
</feature>
<feature type="binding site" evidence="2">
    <location>
        <position position="296"/>
    </location>
    <ligand>
        <name>Mg(2+)</name>
        <dbReference type="ChEBI" id="CHEBI:18420"/>
        <label>1</label>
    </ligand>
</feature>
<feature type="binding site" evidence="2">
    <location>
        <position position="296"/>
    </location>
    <ligand>
        <name>Mg(2+)</name>
        <dbReference type="ChEBI" id="CHEBI:18420"/>
        <label>2</label>
    </ligand>
</feature>
<feature type="binding site" evidence="2">
    <location>
        <position position="298"/>
    </location>
    <ligand>
        <name>Mg(2+)</name>
        <dbReference type="ChEBI" id="CHEBI:18420"/>
        <label>2</label>
    </ligand>
</feature>
<sequence>MTQKNLLLLCGGGGDEHSISLLSANFFEAQLATLPHFNVLRVELNAKGQYHTQAGELCELTNSQQLRFDDETKAPWNVDYVIPCIHGYPGETGDIQSYFELINLPYFGCDSESSSNCFNKVTAKMWFSALGIPNTPYIFLSEFNQQSLEQAEAALAKWGSIFIKAASQGSSVGCYRVDSIEQLASSLEEAFTFSPYVVIEKTITARELEVAAYEADGEIIATKPGEIICASNTFYSFDEKYAENSQAQTVIEADVDEAIAKQIQEYAIKAFKGMKLRHLSRIDFFLTEDNEILLNEINTFPGQTQISMFPKMLQNHGHNFAQYLSGNILAQLKS</sequence>
<dbReference type="EC" id="6.3.2.4" evidence="2"/>
<dbReference type="EMBL" id="CP000851">
    <property type="protein sequence ID" value="ABV87742.1"/>
    <property type="molecule type" value="Genomic_DNA"/>
</dbReference>
<dbReference type="RefSeq" id="WP_012155656.1">
    <property type="nucleotide sequence ID" value="NC_009901.1"/>
</dbReference>
<dbReference type="SMR" id="A8H5A5"/>
<dbReference type="STRING" id="398579.Spea_2422"/>
<dbReference type="KEGG" id="spl:Spea_2422"/>
<dbReference type="eggNOG" id="COG1181">
    <property type="taxonomic scope" value="Bacteria"/>
</dbReference>
<dbReference type="HOGENOM" id="CLU_039268_0_0_6"/>
<dbReference type="OrthoDB" id="9813261at2"/>
<dbReference type="UniPathway" id="UPA00219"/>
<dbReference type="Proteomes" id="UP000002608">
    <property type="component" value="Chromosome"/>
</dbReference>
<dbReference type="GO" id="GO:0005829">
    <property type="term" value="C:cytosol"/>
    <property type="evidence" value="ECO:0007669"/>
    <property type="project" value="TreeGrafter"/>
</dbReference>
<dbReference type="GO" id="GO:0005524">
    <property type="term" value="F:ATP binding"/>
    <property type="evidence" value="ECO:0007669"/>
    <property type="project" value="UniProtKB-KW"/>
</dbReference>
<dbReference type="GO" id="GO:0008716">
    <property type="term" value="F:D-alanine-D-alanine ligase activity"/>
    <property type="evidence" value="ECO:0007669"/>
    <property type="project" value="UniProtKB-UniRule"/>
</dbReference>
<dbReference type="GO" id="GO:0046872">
    <property type="term" value="F:metal ion binding"/>
    <property type="evidence" value="ECO:0007669"/>
    <property type="project" value="UniProtKB-KW"/>
</dbReference>
<dbReference type="GO" id="GO:0071555">
    <property type="term" value="P:cell wall organization"/>
    <property type="evidence" value="ECO:0007669"/>
    <property type="project" value="UniProtKB-KW"/>
</dbReference>
<dbReference type="GO" id="GO:0009252">
    <property type="term" value="P:peptidoglycan biosynthetic process"/>
    <property type="evidence" value="ECO:0007669"/>
    <property type="project" value="UniProtKB-UniRule"/>
</dbReference>
<dbReference type="GO" id="GO:0008360">
    <property type="term" value="P:regulation of cell shape"/>
    <property type="evidence" value="ECO:0007669"/>
    <property type="project" value="UniProtKB-KW"/>
</dbReference>
<dbReference type="Gene3D" id="3.40.50.20">
    <property type="match status" value="1"/>
</dbReference>
<dbReference type="Gene3D" id="3.30.1490.20">
    <property type="entry name" value="ATP-grasp fold, A domain"/>
    <property type="match status" value="1"/>
</dbReference>
<dbReference type="Gene3D" id="3.30.470.20">
    <property type="entry name" value="ATP-grasp fold, B domain"/>
    <property type="match status" value="1"/>
</dbReference>
<dbReference type="HAMAP" id="MF_00047">
    <property type="entry name" value="Dala_Dala_lig"/>
    <property type="match status" value="1"/>
</dbReference>
<dbReference type="InterPro" id="IPR011761">
    <property type="entry name" value="ATP-grasp"/>
</dbReference>
<dbReference type="InterPro" id="IPR013815">
    <property type="entry name" value="ATP_grasp_subdomain_1"/>
</dbReference>
<dbReference type="InterPro" id="IPR000291">
    <property type="entry name" value="D-Ala_lig_Van_CS"/>
</dbReference>
<dbReference type="InterPro" id="IPR005905">
    <property type="entry name" value="D_ala_D_ala"/>
</dbReference>
<dbReference type="InterPro" id="IPR011095">
    <property type="entry name" value="Dala_Dala_lig_C"/>
</dbReference>
<dbReference type="InterPro" id="IPR011127">
    <property type="entry name" value="Dala_Dala_lig_N"/>
</dbReference>
<dbReference type="InterPro" id="IPR016185">
    <property type="entry name" value="PreATP-grasp_dom_sf"/>
</dbReference>
<dbReference type="NCBIfam" id="TIGR01205">
    <property type="entry name" value="D_ala_D_alaTIGR"/>
    <property type="match status" value="1"/>
</dbReference>
<dbReference type="NCBIfam" id="NF002527">
    <property type="entry name" value="PRK01966.1-3"/>
    <property type="match status" value="1"/>
</dbReference>
<dbReference type="NCBIfam" id="NF002528">
    <property type="entry name" value="PRK01966.1-4"/>
    <property type="match status" value="1"/>
</dbReference>
<dbReference type="PANTHER" id="PTHR23132">
    <property type="entry name" value="D-ALANINE--D-ALANINE LIGASE"/>
    <property type="match status" value="1"/>
</dbReference>
<dbReference type="PANTHER" id="PTHR23132:SF25">
    <property type="entry name" value="D-ALANINE--D-ALANINE LIGASE A"/>
    <property type="match status" value="1"/>
</dbReference>
<dbReference type="Pfam" id="PF07478">
    <property type="entry name" value="Dala_Dala_lig_C"/>
    <property type="match status" value="1"/>
</dbReference>
<dbReference type="Pfam" id="PF01820">
    <property type="entry name" value="Dala_Dala_lig_N"/>
    <property type="match status" value="1"/>
</dbReference>
<dbReference type="PIRSF" id="PIRSF039102">
    <property type="entry name" value="Ddl/VanB"/>
    <property type="match status" value="1"/>
</dbReference>
<dbReference type="SUPFAM" id="SSF56059">
    <property type="entry name" value="Glutathione synthetase ATP-binding domain-like"/>
    <property type="match status" value="1"/>
</dbReference>
<dbReference type="SUPFAM" id="SSF52440">
    <property type="entry name" value="PreATP-grasp domain"/>
    <property type="match status" value="1"/>
</dbReference>
<dbReference type="PROSITE" id="PS50975">
    <property type="entry name" value="ATP_GRASP"/>
    <property type="match status" value="1"/>
</dbReference>
<dbReference type="PROSITE" id="PS00843">
    <property type="entry name" value="DALA_DALA_LIGASE_1"/>
    <property type="match status" value="1"/>
</dbReference>
<dbReference type="PROSITE" id="PS00844">
    <property type="entry name" value="DALA_DALA_LIGASE_2"/>
    <property type="match status" value="1"/>
</dbReference>
<keyword id="KW-0067">ATP-binding</keyword>
<keyword id="KW-0133">Cell shape</keyword>
<keyword id="KW-0961">Cell wall biogenesis/degradation</keyword>
<keyword id="KW-0963">Cytoplasm</keyword>
<keyword id="KW-0436">Ligase</keyword>
<keyword id="KW-0460">Magnesium</keyword>
<keyword id="KW-0464">Manganese</keyword>
<keyword id="KW-0479">Metal-binding</keyword>
<keyword id="KW-0547">Nucleotide-binding</keyword>
<keyword id="KW-0573">Peptidoglycan synthesis</keyword>
<keyword id="KW-1185">Reference proteome</keyword>
<name>DDL_SHEPA</name>
<reference key="1">
    <citation type="submission" date="2007-10" db="EMBL/GenBank/DDBJ databases">
        <title>Complete sequence of Shewanella pealeana ATCC 700345.</title>
        <authorList>
            <consortium name="US DOE Joint Genome Institute"/>
            <person name="Copeland A."/>
            <person name="Lucas S."/>
            <person name="Lapidus A."/>
            <person name="Barry K."/>
            <person name="Glavina del Rio T."/>
            <person name="Dalin E."/>
            <person name="Tice H."/>
            <person name="Pitluck S."/>
            <person name="Chertkov O."/>
            <person name="Brettin T."/>
            <person name="Bruce D."/>
            <person name="Detter J.C."/>
            <person name="Han C."/>
            <person name="Schmutz J."/>
            <person name="Larimer F."/>
            <person name="Land M."/>
            <person name="Hauser L."/>
            <person name="Kyrpides N."/>
            <person name="Kim E."/>
            <person name="Zhao J.-S.Z."/>
            <person name="Manno D."/>
            <person name="Hawari J."/>
            <person name="Richardson P."/>
        </authorList>
    </citation>
    <scope>NUCLEOTIDE SEQUENCE [LARGE SCALE GENOMIC DNA]</scope>
    <source>
        <strain>ATCC 700345 / ANG-SQ1</strain>
    </source>
</reference>
<comment type="function">
    <text evidence="2">Cell wall formation.</text>
</comment>
<comment type="catalytic activity">
    <reaction evidence="2">
        <text>2 D-alanine + ATP = D-alanyl-D-alanine + ADP + phosphate + H(+)</text>
        <dbReference type="Rhea" id="RHEA:11224"/>
        <dbReference type="ChEBI" id="CHEBI:15378"/>
        <dbReference type="ChEBI" id="CHEBI:30616"/>
        <dbReference type="ChEBI" id="CHEBI:43474"/>
        <dbReference type="ChEBI" id="CHEBI:57416"/>
        <dbReference type="ChEBI" id="CHEBI:57822"/>
        <dbReference type="ChEBI" id="CHEBI:456216"/>
        <dbReference type="EC" id="6.3.2.4"/>
    </reaction>
</comment>
<comment type="cofactor">
    <cofactor evidence="1">
        <name>Mg(2+)</name>
        <dbReference type="ChEBI" id="CHEBI:18420"/>
    </cofactor>
    <cofactor evidence="1">
        <name>Mn(2+)</name>
        <dbReference type="ChEBI" id="CHEBI:29035"/>
    </cofactor>
    <text evidence="1">Binds 2 magnesium or manganese ions per subunit.</text>
</comment>
<comment type="pathway">
    <text evidence="2">Cell wall biogenesis; peptidoglycan biosynthesis.</text>
</comment>
<comment type="subcellular location">
    <subcellularLocation>
        <location evidence="2">Cytoplasm</location>
    </subcellularLocation>
</comment>
<comment type="similarity">
    <text evidence="2">Belongs to the D-alanine--D-alanine ligase family.</text>
</comment>
<organism>
    <name type="scientific">Shewanella pealeana (strain ATCC 700345 / ANG-SQ1)</name>
    <dbReference type="NCBI Taxonomy" id="398579"/>
    <lineage>
        <taxon>Bacteria</taxon>
        <taxon>Pseudomonadati</taxon>
        <taxon>Pseudomonadota</taxon>
        <taxon>Gammaproteobacteria</taxon>
        <taxon>Alteromonadales</taxon>
        <taxon>Shewanellaceae</taxon>
        <taxon>Shewanella</taxon>
    </lineage>
</organism>
<protein>
    <recommendedName>
        <fullName evidence="2">D-alanine--D-alanine ligase</fullName>
        <ecNumber evidence="2">6.3.2.4</ecNumber>
    </recommendedName>
    <alternativeName>
        <fullName evidence="2">D-Ala-D-Ala ligase</fullName>
    </alternativeName>
    <alternativeName>
        <fullName evidence="2">D-alanylalanine synthetase</fullName>
    </alternativeName>
</protein>
<gene>
    <name evidence="2" type="primary">ddl</name>
    <name type="ordered locus">Spea_2422</name>
</gene>
<accession>A8H5A5</accession>
<evidence type="ECO:0000250" key="1"/>
<evidence type="ECO:0000255" key="2">
    <source>
        <dbReference type="HAMAP-Rule" id="MF_00047"/>
    </source>
</evidence>